<organism>
    <name type="scientific">Macaca mulatta</name>
    <name type="common">Rhesus macaque</name>
    <dbReference type="NCBI Taxonomy" id="9544"/>
    <lineage>
        <taxon>Eukaryota</taxon>
        <taxon>Metazoa</taxon>
        <taxon>Chordata</taxon>
        <taxon>Craniata</taxon>
        <taxon>Vertebrata</taxon>
        <taxon>Euteleostomi</taxon>
        <taxon>Mammalia</taxon>
        <taxon>Eutheria</taxon>
        <taxon>Euarchontoglires</taxon>
        <taxon>Primates</taxon>
        <taxon>Haplorrhini</taxon>
        <taxon>Catarrhini</taxon>
        <taxon>Cercopithecidae</taxon>
        <taxon>Cercopithecinae</taxon>
        <taxon>Macaca</taxon>
    </lineage>
</organism>
<proteinExistence type="inferred from homology"/>
<comment type="function">
    <text evidence="1">Atypical E3 ubiquitin-protein ligase which ubiquitinates TLR2 at 'Lys-754' leading to its degradation by the proteasome. Plays a role in regulating inflammatory cytokine release and gram-positive bacterial clearance by functioning, in part, through the ubiquitination and degradation of TLR2. Inhibitor of protein phosphatase 1.</text>
</comment>
<comment type="catalytic activity">
    <reaction evidence="1">
        <text>S-ubiquitinyl-[E2 ubiquitin-conjugating enzyme]-L-cysteine + [acceptor protein]-L-lysine = [E2 ubiquitin-conjugating enzyme]-L-cysteine + N(6)-ubiquitinyl-[acceptor protein]-L-lysine.</text>
        <dbReference type="EC" id="2.3.2.27"/>
    </reaction>
</comment>
<comment type="pathway">
    <text>Protein modification; protein ubiquitination.</text>
</comment>
<comment type="subunit">
    <text evidence="2">Interacts with TLR2 and UBE2D2.</text>
</comment>
<comment type="PTM">
    <text evidence="1">Auto-ubiquitinated.</text>
</comment>
<feature type="initiator methionine" description="Removed" evidence="1">
    <location>
        <position position="1"/>
    </location>
</feature>
<feature type="chain" id="PRO_0000239620" description="E3 ubiquitin-protein ligase PPP1R11">
    <location>
        <begin position="2"/>
        <end position="126"/>
    </location>
</feature>
<feature type="region of interest" description="Disordered" evidence="3">
    <location>
        <begin position="1"/>
        <end position="25"/>
    </location>
</feature>
<feature type="region of interest" description="Atypical RING finger domain 1" evidence="1">
    <location>
        <begin position="52"/>
        <end position="62"/>
    </location>
</feature>
<feature type="region of interest" description="Disordered" evidence="3">
    <location>
        <begin position="70"/>
        <end position="126"/>
    </location>
</feature>
<feature type="region of interest" description="Atypical RING finger domain 2" evidence="1">
    <location>
        <begin position="85"/>
        <end position="94"/>
    </location>
</feature>
<feature type="compositionally biased region" description="Low complexity" evidence="3">
    <location>
        <begin position="10"/>
        <end position="22"/>
    </location>
</feature>
<feature type="compositionally biased region" description="Basic residues" evidence="3">
    <location>
        <begin position="89"/>
        <end position="101"/>
    </location>
</feature>
<feature type="compositionally biased region" description="Pro residues" evidence="3">
    <location>
        <begin position="107"/>
        <end position="126"/>
    </location>
</feature>
<feature type="modified residue" description="N-acetylalanine" evidence="1">
    <location>
        <position position="2"/>
    </location>
</feature>
<feature type="modified residue" description="Phosphoserine" evidence="1">
    <location>
        <position position="73"/>
    </location>
</feature>
<feature type="modified residue" description="Phosphoserine" evidence="1">
    <location>
        <position position="74"/>
    </location>
</feature>
<feature type="modified residue" description="Phosphothreonine" evidence="1">
    <location>
        <position position="75"/>
    </location>
</feature>
<feature type="modified residue" description="Phosphoserine" evidence="1">
    <location>
        <position position="77"/>
    </location>
</feature>
<feature type="modified residue" description="Phosphothreonine" evidence="1">
    <location>
        <position position="109"/>
    </location>
</feature>
<sequence>MAEAGAGLSETVTETTVTVTTEPENRSLTIKLRKRKPEKKVEWTSDTVDNEHMGRRSSKCCCIYEKPRAFGESSTESDEEEEEGCGHTHCVRGHRKGRRRATLGPTPTTPPQPPDPSQPPPGPMQH</sequence>
<evidence type="ECO:0000250" key="1">
    <source>
        <dbReference type="UniProtKB" id="O60927"/>
    </source>
</evidence>
<evidence type="ECO:0000250" key="2">
    <source>
        <dbReference type="UniProtKB" id="Q8K1L5"/>
    </source>
</evidence>
<evidence type="ECO:0000256" key="3">
    <source>
        <dbReference type="SAM" id="MobiDB-lite"/>
    </source>
</evidence>
<dbReference type="EC" id="2.3.2.27"/>
<dbReference type="EMBL" id="AB128049">
    <property type="protein sequence ID" value="BAD69775.1"/>
    <property type="molecule type" value="Genomic_DNA"/>
</dbReference>
<dbReference type="RefSeq" id="NP_001040601.1">
    <property type="nucleotide sequence ID" value="NM_001047136.1"/>
</dbReference>
<dbReference type="SMR" id="Q5TM51"/>
<dbReference type="FunCoup" id="Q5TM51">
    <property type="interactions" value="1813"/>
</dbReference>
<dbReference type="STRING" id="9544.ENSMMUP00000015892"/>
<dbReference type="PaxDb" id="9544-ENSMMUP00000015891"/>
<dbReference type="Ensembl" id="ENSMMUT00000016969.4">
    <property type="protein sequence ID" value="ENSMMUP00000015892.3"/>
    <property type="gene ID" value="ENSMMUG00000012122.4"/>
</dbReference>
<dbReference type="GeneID" id="712286"/>
<dbReference type="KEGG" id="mcc:712286"/>
<dbReference type="CTD" id="6992"/>
<dbReference type="VEuPathDB" id="HostDB:ENSMMUG00000012122"/>
<dbReference type="VGNC" id="VGNC:82209">
    <property type="gene designation" value="PPP1R11"/>
</dbReference>
<dbReference type="eggNOG" id="KOG4102">
    <property type="taxonomic scope" value="Eukaryota"/>
</dbReference>
<dbReference type="GeneTree" id="ENSGT00390000001153"/>
<dbReference type="HOGENOM" id="CLU_098333_6_2_1"/>
<dbReference type="InParanoid" id="Q5TM51"/>
<dbReference type="OMA" id="CILGHSR"/>
<dbReference type="OrthoDB" id="307488at2759"/>
<dbReference type="TreeFam" id="TF352541"/>
<dbReference type="UniPathway" id="UPA00143"/>
<dbReference type="Proteomes" id="UP000006718">
    <property type="component" value="Chromosome 4"/>
</dbReference>
<dbReference type="Bgee" id="ENSMMUG00000012122">
    <property type="expression patterns" value="Expressed in spermatid and 22 other cell types or tissues"/>
</dbReference>
<dbReference type="ExpressionAtlas" id="Q5TM51">
    <property type="expression patterns" value="baseline"/>
</dbReference>
<dbReference type="GO" id="GO:0005634">
    <property type="term" value="C:nucleus"/>
    <property type="evidence" value="ECO:0000318"/>
    <property type="project" value="GO_Central"/>
</dbReference>
<dbReference type="GO" id="GO:0008157">
    <property type="term" value="F:protein phosphatase 1 binding"/>
    <property type="evidence" value="ECO:0000318"/>
    <property type="project" value="GO_Central"/>
</dbReference>
<dbReference type="GO" id="GO:0004865">
    <property type="term" value="F:protein serine/threonine phosphatase inhibitor activity"/>
    <property type="evidence" value="ECO:0000318"/>
    <property type="project" value="GO_Central"/>
</dbReference>
<dbReference type="GO" id="GO:0061630">
    <property type="term" value="F:ubiquitin protein ligase activity"/>
    <property type="evidence" value="ECO:0000250"/>
    <property type="project" value="UniProtKB"/>
</dbReference>
<dbReference type="GO" id="GO:0050830">
    <property type="term" value="P:defense response to Gram-positive bacterium"/>
    <property type="evidence" value="ECO:0000250"/>
    <property type="project" value="UniProtKB"/>
</dbReference>
<dbReference type="GO" id="GO:0001818">
    <property type="term" value="P:negative regulation of cytokine production"/>
    <property type="evidence" value="ECO:0000250"/>
    <property type="project" value="UniProtKB"/>
</dbReference>
<dbReference type="GO" id="GO:0016567">
    <property type="term" value="P:protein ubiquitination"/>
    <property type="evidence" value="ECO:0007669"/>
    <property type="project" value="UniProtKB-UniPathway"/>
</dbReference>
<dbReference type="GO" id="GO:0006511">
    <property type="term" value="P:ubiquitin-dependent protein catabolic process"/>
    <property type="evidence" value="ECO:0000250"/>
    <property type="project" value="UniProtKB"/>
</dbReference>
<dbReference type="InterPro" id="IPR011107">
    <property type="entry name" value="PPI_Ypi1"/>
</dbReference>
<dbReference type="PANTHER" id="PTHR20835:SF0">
    <property type="entry name" value="E3 UBIQUITIN-PROTEIN LIGASE PPP1R11"/>
    <property type="match status" value="1"/>
</dbReference>
<dbReference type="PANTHER" id="PTHR20835">
    <property type="entry name" value="E3 UBIQUITIN-PROTEIN LIGASE PPP1R11-RELATED"/>
    <property type="match status" value="1"/>
</dbReference>
<dbReference type="Pfam" id="PF07491">
    <property type="entry name" value="PPI_Ypi1"/>
    <property type="match status" value="1"/>
</dbReference>
<name>PP1RB_MACMU</name>
<reference key="1">
    <citation type="journal article" date="2004" name="Mol. Biol. Evol.">
        <title>Rhesus macaque class I duplicon structures, organization, and evolution within the alpha block of the major histocompatibility complex.</title>
        <authorList>
            <person name="Kulski J.K."/>
            <person name="Anzai T."/>
            <person name="Shiina T."/>
            <person name="Inoko H."/>
        </authorList>
    </citation>
    <scope>NUCLEOTIDE SEQUENCE [LARGE SCALE GENOMIC DNA]</scope>
</reference>
<gene>
    <name type="primary">PPP1R11</name>
</gene>
<protein>
    <recommendedName>
        <fullName>E3 ubiquitin-protein ligase PPP1R11</fullName>
        <ecNumber>2.3.2.27</ecNumber>
    </recommendedName>
    <alternativeName>
        <fullName>Protein phosphatase 1 regulatory subunit 11</fullName>
    </alternativeName>
</protein>
<keyword id="KW-0007">Acetylation</keyword>
<keyword id="KW-0597">Phosphoprotein</keyword>
<keyword id="KW-0650">Protein phosphatase inhibitor</keyword>
<keyword id="KW-1185">Reference proteome</keyword>
<keyword id="KW-0808">Transferase</keyword>
<keyword id="KW-0832">Ubl conjugation</keyword>
<keyword id="KW-0833">Ubl conjugation pathway</keyword>
<accession>Q5TM51</accession>